<gene>
    <name evidence="1" type="primary">pheS</name>
    <name type="ordered locus">BCG9842_B0567</name>
</gene>
<comment type="catalytic activity">
    <reaction evidence="1">
        <text>tRNA(Phe) + L-phenylalanine + ATP = L-phenylalanyl-tRNA(Phe) + AMP + diphosphate + H(+)</text>
        <dbReference type="Rhea" id="RHEA:19413"/>
        <dbReference type="Rhea" id="RHEA-COMP:9668"/>
        <dbReference type="Rhea" id="RHEA-COMP:9699"/>
        <dbReference type="ChEBI" id="CHEBI:15378"/>
        <dbReference type="ChEBI" id="CHEBI:30616"/>
        <dbReference type="ChEBI" id="CHEBI:33019"/>
        <dbReference type="ChEBI" id="CHEBI:58095"/>
        <dbReference type="ChEBI" id="CHEBI:78442"/>
        <dbReference type="ChEBI" id="CHEBI:78531"/>
        <dbReference type="ChEBI" id="CHEBI:456215"/>
        <dbReference type="EC" id="6.1.1.20"/>
    </reaction>
</comment>
<comment type="cofactor">
    <cofactor evidence="1">
        <name>Mg(2+)</name>
        <dbReference type="ChEBI" id="CHEBI:18420"/>
    </cofactor>
    <text evidence="1">Binds 2 magnesium ions per tetramer.</text>
</comment>
<comment type="subunit">
    <text evidence="1">Tetramer of two alpha and two beta subunits.</text>
</comment>
<comment type="subcellular location">
    <subcellularLocation>
        <location evidence="1">Cytoplasm</location>
    </subcellularLocation>
</comment>
<comment type="similarity">
    <text evidence="1">Belongs to the class-II aminoacyl-tRNA synthetase family. Phe-tRNA synthetase alpha subunit type 1 subfamily.</text>
</comment>
<feature type="chain" id="PRO_1000119387" description="Phenylalanine--tRNA ligase alpha subunit">
    <location>
        <begin position="1"/>
        <end position="344"/>
    </location>
</feature>
<feature type="binding site" evidence="1">
    <location>
        <position position="256"/>
    </location>
    <ligand>
        <name>Mg(2+)</name>
        <dbReference type="ChEBI" id="CHEBI:18420"/>
        <note>shared with beta subunit</note>
    </ligand>
</feature>
<reference key="1">
    <citation type="submission" date="2008-10" db="EMBL/GenBank/DDBJ databases">
        <title>Genome sequence of Bacillus cereus G9842.</title>
        <authorList>
            <person name="Dodson R.J."/>
            <person name="Durkin A.S."/>
            <person name="Rosovitz M.J."/>
            <person name="Rasko D.A."/>
            <person name="Hoffmaster A."/>
            <person name="Ravel J."/>
            <person name="Sutton G."/>
        </authorList>
    </citation>
    <scope>NUCLEOTIDE SEQUENCE [LARGE SCALE GENOMIC DNA]</scope>
    <source>
        <strain>G9842</strain>
    </source>
</reference>
<dbReference type="EC" id="6.1.1.20" evidence="1"/>
<dbReference type="EMBL" id="CP001186">
    <property type="protein sequence ID" value="ACK95833.1"/>
    <property type="molecule type" value="Genomic_DNA"/>
</dbReference>
<dbReference type="RefSeq" id="WP_000388222.1">
    <property type="nucleotide sequence ID" value="NC_011772.1"/>
</dbReference>
<dbReference type="SMR" id="B7IJW0"/>
<dbReference type="GeneID" id="87591739"/>
<dbReference type="KEGG" id="bcg:BCG9842_B0567"/>
<dbReference type="HOGENOM" id="CLU_025086_0_1_9"/>
<dbReference type="Proteomes" id="UP000006744">
    <property type="component" value="Chromosome"/>
</dbReference>
<dbReference type="GO" id="GO:0005737">
    <property type="term" value="C:cytoplasm"/>
    <property type="evidence" value="ECO:0007669"/>
    <property type="project" value="UniProtKB-SubCell"/>
</dbReference>
<dbReference type="GO" id="GO:0005524">
    <property type="term" value="F:ATP binding"/>
    <property type="evidence" value="ECO:0007669"/>
    <property type="project" value="UniProtKB-UniRule"/>
</dbReference>
<dbReference type="GO" id="GO:0140096">
    <property type="term" value="F:catalytic activity, acting on a protein"/>
    <property type="evidence" value="ECO:0007669"/>
    <property type="project" value="UniProtKB-ARBA"/>
</dbReference>
<dbReference type="GO" id="GO:0000287">
    <property type="term" value="F:magnesium ion binding"/>
    <property type="evidence" value="ECO:0007669"/>
    <property type="project" value="UniProtKB-UniRule"/>
</dbReference>
<dbReference type="GO" id="GO:0004826">
    <property type="term" value="F:phenylalanine-tRNA ligase activity"/>
    <property type="evidence" value="ECO:0007669"/>
    <property type="project" value="UniProtKB-UniRule"/>
</dbReference>
<dbReference type="GO" id="GO:0016740">
    <property type="term" value="F:transferase activity"/>
    <property type="evidence" value="ECO:0007669"/>
    <property type="project" value="UniProtKB-ARBA"/>
</dbReference>
<dbReference type="GO" id="GO:0000049">
    <property type="term" value="F:tRNA binding"/>
    <property type="evidence" value="ECO:0007669"/>
    <property type="project" value="InterPro"/>
</dbReference>
<dbReference type="GO" id="GO:0006432">
    <property type="term" value="P:phenylalanyl-tRNA aminoacylation"/>
    <property type="evidence" value="ECO:0007669"/>
    <property type="project" value="UniProtKB-UniRule"/>
</dbReference>
<dbReference type="CDD" id="cd00496">
    <property type="entry name" value="PheRS_alpha_core"/>
    <property type="match status" value="1"/>
</dbReference>
<dbReference type="FunFam" id="3.30.930.10:FF:000003">
    <property type="entry name" value="Phenylalanine--tRNA ligase alpha subunit"/>
    <property type="match status" value="1"/>
</dbReference>
<dbReference type="Gene3D" id="3.30.930.10">
    <property type="entry name" value="Bira Bifunctional Protein, Domain 2"/>
    <property type="match status" value="1"/>
</dbReference>
<dbReference type="HAMAP" id="MF_00281">
    <property type="entry name" value="Phe_tRNA_synth_alpha1"/>
    <property type="match status" value="1"/>
</dbReference>
<dbReference type="InterPro" id="IPR006195">
    <property type="entry name" value="aa-tRNA-synth_II"/>
</dbReference>
<dbReference type="InterPro" id="IPR045864">
    <property type="entry name" value="aa-tRNA-synth_II/BPL/LPL"/>
</dbReference>
<dbReference type="InterPro" id="IPR004529">
    <property type="entry name" value="Phe-tRNA-synth_IIc_asu"/>
</dbReference>
<dbReference type="InterPro" id="IPR004188">
    <property type="entry name" value="Phe-tRNA_ligase_II_N"/>
</dbReference>
<dbReference type="InterPro" id="IPR022911">
    <property type="entry name" value="Phe_tRNA_ligase_alpha1_bac"/>
</dbReference>
<dbReference type="InterPro" id="IPR002319">
    <property type="entry name" value="Phenylalanyl-tRNA_Synthase"/>
</dbReference>
<dbReference type="InterPro" id="IPR010978">
    <property type="entry name" value="tRNA-bd_arm"/>
</dbReference>
<dbReference type="NCBIfam" id="TIGR00468">
    <property type="entry name" value="pheS"/>
    <property type="match status" value="1"/>
</dbReference>
<dbReference type="PANTHER" id="PTHR11538:SF41">
    <property type="entry name" value="PHENYLALANINE--TRNA LIGASE, MITOCHONDRIAL"/>
    <property type="match status" value="1"/>
</dbReference>
<dbReference type="PANTHER" id="PTHR11538">
    <property type="entry name" value="PHENYLALANYL-TRNA SYNTHETASE"/>
    <property type="match status" value="1"/>
</dbReference>
<dbReference type="Pfam" id="PF02912">
    <property type="entry name" value="Phe_tRNA-synt_N"/>
    <property type="match status" value="1"/>
</dbReference>
<dbReference type="Pfam" id="PF01409">
    <property type="entry name" value="tRNA-synt_2d"/>
    <property type="match status" value="1"/>
</dbReference>
<dbReference type="SUPFAM" id="SSF55681">
    <property type="entry name" value="Class II aaRS and biotin synthetases"/>
    <property type="match status" value="1"/>
</dbReference>
<dbReference type="SUPFAM" id="SSF46589">
    <property type="entry name" value="tRNA-binding arm"/>
    <property type="match status" value="1"/>
</dbReference>
<dbReference type="PROSITE" id="PS50862">
    <property type="entry name" value="AA_TRNA_LIGASE_II"/>
    <property type="match status" value="1"/>
</dbReference>
<name>SYFA_BACC2</name>
<proteinExistence type="inferred from homology"/>
<keyword id="KW-0030">Aminoacyl-tRNA synthetase</keyword>
<keyword id="KW-0067">ATP-binding</keyword>
<keyword id="KW-0963">Cytoplasm</keyword>
<keyword id="KW-0436">Ligase</keyword>
<keyword id="KW-0460">Magnesium</keyword>
<keyword id="KW-0479">Metal-binding</keyword>
<keyword id="KW-0547">Nucleotide-binding</keyword>
<keyword id="KW-0648">Protein biosynthesis</keyword>
<evidence type="ECO:0000255" key="1">
    <source>
        <dbReference type="HAMAP-Rule" id="MF_00281"/>
    </source>
</evidence>
<sequence length="344" mass="38990">MEARLKELKQKALELIEEAKELKGLNDVRVAYLGKKGPITEVLRGMGKLSAEERPRMGALVNEVREAIQTRLEDKISNLEKAVIEAKLATETIDVTLPGRPVETGCHHPLTAVVEQIEDVFIGMGYEVAEGTEVEKDYYNFEALNLPKDHPARDMQDTFYITEETLLRTHTSSVQARTMENNKEKGPIKIICPGKVYRRDDDDATHSHQFMQIEGLVIDKNIRMSDLKGTLQVFVKKMFGEDREIRLRPSFFPFTEPSVEMDISCMMCHGKGCGTCKGTGWIEILGAGMVHPNVLEMAGYDSKEYQGFAFGMGAERIAMLKYGVDDIRHFYTNDVRFLQQFKRA</sequence>
<protein>
    <recommendedName>
        <fullName evidence="1">Phenylalanine--tRNA ligase alpha subunit</fullName>
        <ecNumber evidence="1">6.1.1.20</ecNumber>
    </recommendedName>
    <alternativeName>
        <fullName evidence="1">Phenylalanyl-tRNA synthetase alpha subunit</fullName>
        <shortName evidence="1">PheRS</shortName>
    </alternativeName>
</protein>
<accession>B7IJW0</accession>
<organism>
    <name type="scientific">Bacillus cereus (strain G9842)</name>
    <dbReference type="NCBI Taxonomy" id="405531"/>
    <lineage>
        <taxon>Bacteria</taxon>
        <taxon>Bacillati</taxon>
        <taxon>Bacillota</taxon>
        <taxon>Bacilli</taxon>
        <taxon>Bacillales</taxon>
        <taxon>Bacillaceae</taxon>
        <taxon>Bacillus</taxon>
        <taxon>Bacillus cereus group</taxon>
    </lineage>
</organism>